<keyword id="KW-0687">Ribonucleoprotein</keyword>
<keyword id="KW-0689">Ribosomal protein</keyword>
<keyword id="KW-0694">RNA-binding</keyword>
<keyword id="KW-0699">rRNA-binding</keyword>
<keyword id="KW-0820">tRNA-binding</keyword>
<accession>Q3KLI1</accession>
<comment type="function">
    <text evidence="1">This is one of the proteins that bind and probably mediate the attachment of the 5S RNA into the large ribosomal subunit, where it forms part of the central protuberance. In the 70S ribosome it contacts protein S13 of the 30S subunit (bridge B1b), connecting the 2 subunits; this bridge is implicated in subunit movement. Contacts the P site tRNA; the 5S rRNA and some of its associated proteins might help stabilize positioning of ribosome-bound tRNAs.</text>
</comment>
<comment type="subunit">
    <text evidence="1">Part of the 50S ribosomal subunit; part of the 5S rRNA/L5/L18/L25 subcomplex. Contacts the 5S rRNA and the P site tRNA. Forms a bridge to the 30S subunit in the 70S ribosome.</text>
</comment>
<comment type="similarity">
    <text evidence="1">Belongs to the universal ribosomal protein uL5 family.</text>
</comment>
<organism>
    <name type="scientific">Chlamydia trachomatis serovar A (strain ATCC VR-571B / DSM 19440 / HAR-13)</name>
    <dbReference type="NCBI Taxonomy" id="315277"/>
    <lineage>
        <taxon>Bacteria</taxon>
        <taxon>Pseudomonadati</taxon>
        <taxon>Chlamydiota</taxon>
        <taxon>Chlamydiia</taxon>
        <taxon>Chlamydiales</taxon>
        <taxon>Chlamydiaceae</taxon>
        <taxon>Chlamydia/Chlamydophila group</taxon>
        <taxon>Chlamydia</taxon>
    </lineage>
</organism>
<protein>
    <recommendedName>
        <fullName evidence="1">Large ribosomal subunit protein uL5</fullName>
    </recommendedName>
    <alternativeName>
        <fullName evidence="2">50S ribosomal protein L5</fullName>
    </alternativeName>
</protein>
<proteinExistence type="inferred from homology"/>
<dbReference type="EMBL" id="CP000051">
    <property type="protein sequence ID" value="AAX50791.1"/>
    <property type="molecule type" value="Genomic_DNA"/>
</dbReference>
<dbReference type="RefSeq" id="WP_009871880.1">
    <property type="nucleotide sequence ID" value="NC_007429.1"/>
</dbReference>
<dbReference type="SMR" id="Q3KLI1"/>
<dbReference type="KEGG" id="cta:CTA_0565"/>
<dbReference type="HOGENOM" id="CLU_061015_2_1_0"/>
<dbReference type="Proteomes" id="UP000002532">
    <property type="component" value="Chromosome"/>
</dbReference>
<dbReference type="GO" id="GO:1990904">
    <property type="term" value="C:ribonucleoprotein complex"/>
    <property type="evidence" value="ECO:0007669"/>
    <property type="project" value="UniProtKB-KW"/>
</dbReference>
<dbReference type="GO" id="GO:0005840">
    <property type="term" value="C:ribosome"/>
    <property type="evidence" value="ECO:0007669"/>
    <property type="project" value="UniProtKB-KW"/>
</dbReference>
<dbReference type="GO" id="GO:0019843">
    <property type="term" value="F:rRNA binding"/>
    <property type="evidence" value="ECO:0007669"/>
    <property type="project" value="UniProtKB-UniRule"/>
</dbReference>
<dbReference type="GO" id="GO:0003735">
    <property type="term" value="F:structural constituent of ribosome"/>
    <property type="evidence" value="ECO:0007669"/>
    <property type="project" value="InterPro"/>
</dbReference>
<dbReference type="GO" id="GO:0000049">
    <property type="term" value="F:tRNA binding"/>
    <property type="evidence" value="ECO:0007669"/>
    <property type="project" value="UniProtKB-UniRule"/>
</dbReference>
<dbReference type="GO" id="GO:0006412">
    <property type="term" value="P:translation"/>
    <property type="evidence" value="ECO:0007669"/>
    <property type="project" value="UniProtKB-UniRule"/>
</dbReference>
<dbReference type="FunFam" id="3.30.1440.10:FF:000001">
    <property type="entry name" value="50S ribosomal protein L5"/>
    <property type="match status" value="1"/>
</dbReference>
<dbReference type="Gene3D" id="3.30.1440.10">
    <property type="match status" value="1"/>
</dbReference>
<dbReference type="HAMAP" id="MF_01333_B">
    <property type="entry name" value="Ribosomal_uL5_B"/>
    <property type="match status" value="1"/>
</dbReference>
<dbReference type="InterPro" id="IPR002132">
    <property type="entry name" value="Ribosomal_uL5"/>
</dbReference>
<dbReference type="InterPro" id="IPR020930">
    <property type="entry name" value="Ribosomal_uL5_bac-type"/>
</dbReference>
<dbReference type="InterPro" id="IPR031309">
    <property type="entry name" value="Ribosomal_uL5_C"/>
</dbReference>
<dbReference type="InterPro" id="IPR022803">
    <property type="entry name" value="Ribosomal_uL5_dom_sf"/>
</dbReference>
<dbReference type="InterPro" id="IPR031310">
    <property type="entry name" value="Ribosomal_uL5_N"/>
</dbReference>
<dbReference type="NCBIfam" id="NF000585">
    <property type="entry name" value="PRK00010.1"/>
    <property type="match status" value="1"/>
</dbReference>
<dbReference type="PANTHER" id="PTHR11994">
    <property type="entry name" value="60S RIBOSOMAL PROTEIN L11-RELATED"/>
    <property type="match status" value="1"/>
</dbReference>
<dbReference type="Pfam" id="PF00281">
    <property type="entry name" value="Ribosomal_L5"/>
    <property type="match status" value="1"/>
</dbReference>
<dbReference type="Pfam" id="PF00673">
    <property type="entry name" value="Ribosomal_L5_C"/>
    <property type="match status" value="1"/>
</dbReference>
<dbReference type="PIRSF" id="PIRSF002161">
    <property type="entry name" value="Ribosomal_L5"/>
    <property type="match status" value="1"/>
</dbReference>
<dbReference type="SUPFAM" id="SSF55282">
    <property type="entry name" value="RL5-like"/>
    <property type="match status" value="1"/>
</dbReference>
<sequence length="180" mass="20581">MSRLKKLYTEEIRKTLQDKFQYENVMQIPVLKKIVISMGLAEAAKDKNLFQAHLEELAVISSQKPLVTRARNSIAGFKLREGQGIGAKVTLRGIRMYDFMDRFCNIVSPRIRDFRGFSCKGDGRGCYSFGLDDQQIFPEVDLDRVKRSQGMNITWVTTAQTDAECLTLLECMGLRFKKAQ</sequence>
<evidence type="ECO:0000255" key="1">
    <source>
        <dbReference type="HAMAP-Rule" id="MF_01333"/>
    </source>
</evidence>
<evidence type="ECO:0000305" key="2"/>
<gene>
    <name evidence="1" type="primary">rplE</name>
    <name type="ordered locus">CTA_0565</name>
</gene>
<reference key="1">
    <citation type="journal article" date="2005" name="Infect. Immun.">
        <title>Comparative genomic analysis of Chlamydia trachomatis oculotropic and genitotropic strains.</title>
        <authorList>
            <person name="Carlson J.H."/>
            <person name="Porcella S.F."/>
            <person name="McClarty G."/>
            <person name="Caldwell H.D."/>
        </authorList>
    </citation>
    <scope>NUCLEOTIDE SEQUENCE [LARGE SCALE GENOMIC DNA]</scope>
    <source>
        <strain>ATCC VR-571B / DSM 19440 / HAR-13</strain>
    </source>
</reference>
<feature type="chain" id="PRO_0000242985" description="Large ribosomal subunit protein uL5">
    <location>
        <begin position="1"/>
        <end position="180"/>
    </location>
</feature>
<name>RL5_CHLTA</name>